<protein>
    <recommendedName>
        <fullName evidence="1">Aromatic amino acid aminotransferase</fullName>
        <shortName evidence="1">ArAT</shortName>
        <ecNumber evidence="1">2.6.1.57</ecNumber>
    </recommendedName>
</protein>
<evidence type="ECO:0000255" key="1">
    <source>
        <dbReference type="HAMAP-Rule" id="MF_01513"/>
    </source>
</evidence>
<evidence type="ECO:0000305" key="2"/>
<feature type="chain" id="PRO_0000292048" description="Aromatic amino acid aminotransferase">
    <location>
        <begin position="1"/>
        <end position="358"/>
    </location>
</feature>
<feature type="modified residue" description="N6-(pyridoxal phosphate)lysine" evidence="1">
    <location>
        <position position="214"/>
    </location>
</feature>
<organism>
    <name type="scientific">Rhodococcus jostii (strain RHA1)</name>
    <dbReference type="NCBI Taxonomy" id="101510"/>
    <lineage>
        <taxon>Bacteria</taxon>
        <taxon>Bacillati</taxon>
        <taxon>Actinomycetota</taxon>
        <taxon>Actinomycetes</taxon>
        <taxon>Mycobacteriales</taxon>
        <taxon>Nocardiaceae</taxon>
        <taxon>Rhodococcus</taxon>
    </lineage>
</organism>
<gene>
    <name evidence="1" type="primary">pat</name>
    <name type="ordered locus">RHA1_ro04128</name>
</gene>
<sequence>MTPRTRADLETIPAYIPGKNFPGAIKLASNETTLGPLPSVRDAIADAAANANRYPDNGHVALIAALADHLGVATENIAAGCGSVSLCQELVQATCNDGDEVIFAWRSFEAYPVVTQVAGATPVKVPLTADHGHDLDAMLAAITDRTRLIFVCNPNNPTGTALTKAELERFLDAVPADVLVALDEAYFEYNRSDADGIELFRGRPNVVVLRTFSKAYGLAGIRVGYAVADPAVVTALTKVHIAFAVNAVAQAAAIASLAASGELLARTDGVVAERKRVRDALLAAGYEVPESAANFVYLPLGAHSGAFAAASAEAGVLLRPYGDDGVRITIGDPAENDAFLAFATSTEARSLANVAVRA</sequence>
<name>PATR_RHOJR</name>
<comment type="function">
    <text evidence="1">Aminotransferase that catalyzes the conversion of aromatic amino acids and 2-oxoglutarate into corresponding aromatic oxo acids and L-glutamate.</text>
</comment>
<comment type="catalytic activity">
    <reaction evidence="1">
        <text>an aromatic L-alpha-amino acid + 2-oxoglutarate = an aromatic oxo-acid + L-glutamate</text>
        <dbReference type="Rhea" id="RHEA:17533"/>
        <dbReference type="ChEBI" id="CHEBI:16810"/>
        <dbReference type="ChEBI" id="CHEBI:29985"/>
        <dbReference type="ChEBI" id="CHEBI:73309"/>
        <dbReference type="ChEBI" id="CHEBI:84824"/>
        <dbReference type="EC" id="2.6.1.57"/>
    </reaction>
</comment>
<comment type="cofactor">
    <cofactor evidence="1">
        <name>pyridoxal 5'-phosphate</name>
        <dbReference type="ChEBI" id="CHEBI:597326"/>
    </cofactor>
</comment>
<comment type="subunit">
    <text evidence="1">Homodimer.</text>
</comment>
<comment type="similarity">
    <text evidence="1">Belongs to the class-II pyridoxal-phosphate-dependent aminotransferase family.</text>
</comment>
<comment type="sequence caution" evidence="2">
    <conflict type="erroneous initiation">
        <sequence resource="EMBL-CDS" id="ABG95924"/>
    </conflict>
    <text>Extended N-terminus.</text>
</comment>
<reference key="1">
    <citation type="journal article" date="2006" name="Proc. Natl. Acad. Sci. U.S.A.">
        <title>The complete genome of Rhodococcus sp. RHA1 provides insights into a catabolic powerhouse.</title>
        <authorList>
            <person name="McLeod M.P."/>
            <person name="Warren R.L."/>
            <person name="Hsiao W.W.L."/>
            <person name="Araki N."/>
            <person name="Myhre M."/>
            <person name="Fernandes C."/>
            <person name="Miyazawa D."/>
            <person name="Wong W."/>
            <person name="Lillquist A.L."/>
            <person name="Wang D."/>
            <person name="Dosanjh M."/>
            <person name="Hara H."/>
            <person name="Petrescu A."/>
            <person name="Morin R.D."/>
            <person name="Yang G."/>
            <person name="Stott J.M."/>
            <person name="Schein J.E."/>
            <person name="Shin H."/>
            <person name="Smailus D."/>
            <person name="Siddiqui A.S."/>
            <person name="Marra M.A."/>
            <person name="Jones S.J.M."/>
            <person name="Holt R."/>
            <person name="Brinkman F.S.L."/>
            <person name="Miyauchi K."/>
            <person name="Fukuda M."/>
            <person name="Davies J.E."/>
            <person name="Mohn W.W."/>
            <person name="Eltis L.D."/>
        </authorList>
    </citation>
    <scope>NUCLEOTIDE SEQUENCE [LARGE SCALE GENOMIC DNA]</scope>
    <source>
        <strain>RHA1</strain>
    </source>
</reference>
<accession>Q0S962</accession>
<dbReference type="EC" id="2.6.1.57" evidence="1"/>
<dbReference type="EMBL" id="CP000431">
    <property type="protein sequence ID" value="ABG95924.1"/>
    <property type="status" value="ALT_INIT"/>
    <property type="molecule type" value="Genomic_DNA"/>
</dbReference>
<dbReference type="RefSeq" id="WP_029539699.1">
    <property type="nucleotide sequence ID" value="NC_008268.1"/>
</dbReference>
<dbReference type="SMR" id="Q0S962"/>
<dbReference type="KEGG" id="rha:RHA1_ro04128"/>
<dbReference type="PATRIC" id="fig|101510.16.peg.4157"/>
<dbReference type="eggNOG" id="COG0079">
    <property type="taxonomic scope" value="Bacteria"/>
</dbReference>
<dbReference type="HOGENOM" id="CLU_017584_3_3_11"/>
<dbReference type="Proteomes" id="UP000008710">
    <property type="component" value="Chromosome"/>
</dbReference>
<dbReference type="GO" id="GO:0008793">
    <property type="term" value="F:aromatic-amino-acid transaminase activity"/>
    <property type="evidence" value="ECO:0007669"/>
    <property type="project" value="UniProtKB-UniRule"/>
</dbReference>
<dbReference type="GO" id="GO:0004400">
    <property type="term" value="F:histidinol-phosphate transaminase activity"/>
    <property type="evidence" value="ECO:0007669"/>
    <property type="project" value="InterPro"/>
</dbReference>
<dbReference type="GO" id="GO:0030170">
    <property type="term" value="F:pyridoxal phosphate binding"/>
    <property type="evidence" value="ECO:0007669"/>
    <property type="project" value="UniProtKB-UniRule"/>
</dbReference>
<dbReference type="GO" id="GO:0000105">
    <property type="term" value="P:L-histidine biosynthetic process"/>
    <property type="evidence" value="ECO:0007669"/>
    <property type="project" value="InterPro"/>
</dbReference>
<dbReference type="CDD" id="cd00609">
    <property type="entry name" value="AAT_like"/>
    <property type="match status" value="1"/>
</dbReference>
<dbReference type="Gene3D" id="3.90.1150.10">
    <property type="entry name" value="Aspartate Aminotransferase, domain 1"/>
    <property type="match status" value="1"/>
</dbReference>
<dbReference type="Gene3D" id="3.40.640.10">
    <property type="entry name" value="Type I PLP-dependent aspartate aminotransferase-like (Major domain)"/>
    <property type="match status" value="1"/>
</dbReference>
<dbReference type="HAMAP" id="MF_01023">
    <property type="entry name" value="HisC_aminotrans_2"/>
    <property type="match status" value="1"/>
</dbReference>
<dbReference type="HAMAP" id="MF_01513">
    <property type="entry name" value="Phe_aminotrans_2"/>
    <property type="match status" value="1"/>
</dbReference>
<dbReference type="InterPro" id="IPR001917">
    <property type="entry name" value="Aminotrans_II_pyridoxalP_BS"/>
</dbReference>
<dbReference type="InterPro" id="IPR004839">
    <property type="entry name" value="Aminotransferase_I/II_large"/>
</dbReference>
<dbReference type="InterPro" id="IPR024892">
    <property type="entry name" value="ArAT"/>
</dbReference>
<dbReference type="InterPro" id="IPR005861">
    <property type="entry name" value="HisP_aminotrans"/>
</dbReference>
<dbReference type="InterPro" id="IPR050106">
    <property type="entry name" value="HistidinolP_aminotransfase"/>
</dbReference>
<dbReference type="InterPro" id="IPR015424">
    <property type="entry name" value="PyrdxlP-dep_Trfase"/>
</dbReference>
<dbReference type="InterPro" id="IPR015421">
    <property type="entry name" value="PyrdxlP-dep_Trfase_major"/>
</dbReference>
<dbReference type="InterPro" id="IPR015422">
    <property type="entry name" value="PyrdxlP-dep_Trfase_small"/>
</dbReference>
<dbReference type="NCBIfam" id="TIGR01141">
    <property type="entry name" value="hisC"/>
    <property type="match status" value="1"/>
</dbReference>
<dbReference type="NCBIfam" id="NF002878">
    <property type="entry name" value="PRK03321.1"/>
    <property type="match status" value="1"/>
</dbReference>
<dbReference type="PANTHER" id="PTHR43643:SF3">
    <property type="entry name" value="HISTIDINOL-PHOSPHATE AMINOTRANSFERASE"/>
    <property type="match status" value="1"/>
</dbReference>
<dbReference type="PANTHER" id="PTHR43643">
    <property type="entry name" value="HISTIDINOL-PHOSPHATE AMINOTRANSFERASE 2"/>
    <property type="match status" value="1"/>
</dbReference>
<dbReference type="Pfam" id="PF00155">
    <property type="entry name" value="Aminotran_1_2"/>
    <property type="match status" value="1"/>
</dbReference>
<dbReference type="SUPFAM" id="SSF53383">
    <property type="entry name" value="PLP-dependent transferases"/>
    <property type="match status" value="1"/>
</dbReference>
<dbReference type="PROSITE" id="PS00599">
    <property type="entry name" value="AA_TRANSFER_CLASS_2"/>
    <property type="match status" value="1"/>
</dbReference>
<proteinExistence type="inferred from homology"/>
<keyword id="KW-0032">Aminotransferase</keyword>
<keyword id="KW-0663">Pyridoxal phosphate</keyword>
<keyword id="KW-0808">Transferase</keyword>